<protein>
    <recommendedName>
        <fullName evidence="1">Urease subunit gamma</fullName>
        <ecNumber evidence="1">3.5.1.5</ecNumber>
    </recommendedName>
    <alternativeName>
        <fullName evidence="1">Urea amidohydrolase subunit gamma</fullName>
    </alternativeName>
</protein>
<organism>
    <name type="scientific">Edwardsiella ictaluri (strain 93-146)</name>
    <dbReference type="NCBI Taxonomy" id="634503"/>
    <lineage>
        <taxon>Bacteria</taxon>
        <taxon>Pseudomonadati</taxon>
        <taxon>Pseudomonadota</taxon>
        <taxon>Gammaproteobacteria</taxon>
        <taxon>Enterobacterales</taxon>
        <taxon>Hafniaceae</taxon>
        <taxon>Edwardsiella</taxon>
    </lineage>
</organism>
<name>URE3_EDWI9</name>
<keyword id="KW-0963">Cytoplasm</keyword>
<keyword id="KW-0378">Hydrolase</keyword>
<feature type="chain" id="PRO_1000212801" description="Urease subunit gamma">
    <location>
        <begin position="1"/>
        <end position="100"/>
    </location>
</feature>
<reference key="1">
    <citation type="submission" date="2009-03" db="EMBL/GenBank/DDBJ databases">
        <title>Complete genome sequence of Edwardsiella ictaluri 93-146.</title>
        <authorList>
            <person name="Williams M.L."/>
            <person name="Gillaspy A.F."/>
            <person name="Dyer D.W."/>
            <person name="Thune R.L."/>
            <person name="Waldbieser G.C."/>
            <person name="Schuster S.C."/>
            <person name="Gipson J."/>
            <person name="Zaitshik J."/>
            <person name="Landry C."/>
            <person name="Lawrence M.L."/>
        </authorList>
    </citation>
    <scope>NUCLEOTIDE SEQUENCE [LARGE SCALE GENOMIC DNA]</scope>
    <source>
        <strain>93-146</strain>
    </source>
</reference>
<sequence>MQLTPREVEKLMVYTLADVALKRKQRGVKLNYPEAVSIITVTAMEGARDGKTVEEVMNEARSVLTRDDVMDGVVELIPNVQVEAIFTDGSRLVTVHDPIQ</sequence>
<accession>C5BDC2</accession>
<gene>
    <name evidence="1" type="primary">ureA</name>
    <name type="ordered locus">NT01EI_2063</name>
</gene>
<dbReference type="EC" id="3.5.1.5" evidence="1"/>
<dbReference type="EMBL" id="CP001600">
    <property type="protein sequence ID" value="ACR69239.1"/>
    <property type="molecule type" value="Genomic_DNA"/>
</dbReference>
<dbReference type="RefSeq" id="WP_015871371.1">
    <property type="nucleotide sequence ID" value="NZ_CP169062.1"/>
</dbReference>
<dbReference type="SMR" id="C5BDC2"/>
<dbReference type="STRING" id="67780.B6E78_02945"/>
<dbReference type="KEGG" id="eic:NT01EI_2063"/>
<dbReference type="HOGENOM" id="CLU_145825_1_0_6"/>
<dbReference type="OrthoDB" id="9797217at2"/>
<dbReference type="UniPathway" id="UPA00258">
    <property type="reaction ID" value="UER00370"/>
</dbReference>
<dbReference type="Proteomes" id="UP000001485">
    <property type="component" value="Chromosome"/>
</dbReference>
<dbReference type="GO" id="GO:0005737">
    <property type="term" value="C:cytoplasm"/>
    <property type="evidence" value="ECO:0007669"/>
    <property type="project" value="UniProtKB-SubCell"/>
</dbReference>
<dbReference type="GO" id="GO:0016151">
    <property type="term" value="F:nickel cation binding"/>
    <property type="evidence" value="ECO:0007669"/>
    <property type="project" value="InterPro"/>
</dbReference>
<dbReference type="GO" id="GO:0009039">
    <property type="term" value="F:urease activity"/>
    <property type="evidence" value="ECO:0007669"/>
    <property type="project" value="UniProtKB-UniRule"/>
</dbReference>
<dbReference type="GO" id="GO:0043419">
    <property type="term" value="P:urea catabolic process"/>
    <property type="evidence" value="ECO:0007669"/>
    <property type="project" value="UniProtKB-UniRule"/>
</dbReference>
<dbReference type="CDD" id="cd00390">
    <property type="entry name" value="Urease_gamma"/>
    <property type="match status" value="1"/>
</dbReference>
<dbReference type="Gene3D" id="3.30.280.10">
    <property type="entry name" value="Urease, gamma-like subunit"/>
    <property type="match status" value="1"/>
</dbReference>
<dbReference type="HAMAP" id="MF_00739">
    <property type="entry name" value="Urease_gamma"/>
    <property type="match status" value="1"/>
</dbReference>
<dbReference type="InterPro" id="IPR012010">
    <property type="entry name" value="Urease_gamma"/>
</dbReference>
<dbReference type="InterPro" id="IPR002026">
    <property type="entry name" value="Urease_gamma/gamma-beta_su"/>
</dbReference>
<dbReference type="InterPro" id="IPR036463">
    <property type="entry name" value="Urease_gamma_sf"/>
</dbReference>
<dbReference type="InterPro" id="IPR050069">
    <property type="entry name" value="Urease_subunit"/>
</dbReference>
<dbReference type="NCBIfam" id="NF009712">
    <property type="entry name" value="PRK13241.1"/>
    <property type="match status" value="1"/>
</dbReference>
<dbReference type="NCBIfam" id="TIGR00193">
    <property type="entry name" value="urease_gam"/>
    <property type="match status" value="1"/>
</dbReference>
<dbReference type="PANTHER" id="PTHR33569">
    <property type="entry name" value="UREASE"/>
    <property type="match status" value="1"/>
</dbReference>
<dbReference type="PANTHER" id="PTHR33569:SF1">
    <property type="entry name" value="UREASE"/>
    <property type="match status" value="1"/>
</dbReference>
<dbReference type="Pfam" id="PF00547">
    <property type="entry name" value="Urease_gamma"/>
    <property type="match status" value="1"/>
</dbReference>
<dbReference type="PIRSF" id="PIRSF001223">
    <property type="entry name" value="Urease_gamma"/>
    <property type="match status" value="1"/>
</dbReference>
<dbReference type="SUPFAM" id="SSF54111">
    <property type="entry name" value="Urease, gamma-subunit"/>
    <property type="match status" value="1"/>
</dbReference>
<evidence type="ECO:0000255" key="1">
    <source>
        <dbReference type="HAMAP-Rule" id="MF_00739"/>
    </source>
</evidence>
<comment type="catalytic activity">
    <reaction evidence="1">
        <text>urea + 2 H2O + H(+) = hydrogencarbonate + 2 NH4(+)</text>
        <dbReference type="Rhea" id="RHEA:20557"/>
        <dbReference type="ChEBI" id="CHEBI:15377"/>
        <dbReference type="ChEBI" id="CHEBI:15378"/>
        <dbReference type="ChEBI" id="CHEBI:16199"/>
        <dbReference type="ChEBI" id="CHEBI:17544"/>
        <dbReference type="ChEBI" id="CHEBI:28938"/>
        <dbReference type="EC" id="3.5.1.5"/>
    </reaction>
</comment>
<comment type="pathway">
    <text evidence="1">Nitrogen metabolism; urea degradation; CO(2) and NH(3) from urea (urease route): step 1/1.</text>
</comment>
<comment type="subunit">
    <text evidence="1">Heterotrimer of UreA (gamma), UreB (beta) and UreC (alpha) subunits. Three heterotrimers associate to form the active enzyme.</text>
</comment>
<comment type="subcellular location">
    <subcellularLocation>
        <location evidence="1">Cytoplasm</location>
    </subcellularLocation>
</comment>
<comment type="similarity">
    <text evidence="1">Belongs to the urease gamma subunit family.</text>
</comment>
<proteinExistence type="inferred from homology"/>